<dbReference type="EC" id="5.4.99.25"/>
<dbReference type="EMBL" id="AE006914">
    <property type="protein sequence ID" value="AAL03203.1"/>
    <property type="molecule type" value="Genomic_DNA"/>
</dbReference>
<dbReference type="PIR" id="A97783">
    <property type="entry name" value="A97783"/>
</dbReference>
<dbReference type="RefSeq" id="WP_010977289.1">
    <property type="nucleotide sequence ID" value="NC_003103.1"/>
</dbReference>
<dbReference type="SMR" id="Q92HV5"/>
<dbReference type="GeneID" id="927755"/>
<dbReference type="KEGG" id="rco:RC0665"/>
<dbReference type="PATRIC" id="fig|272944.4.peg.758"/>
<dbReference type="HOGENOM" id="CLU_032087_0_3_5"/>
<dbReference type="Proteomes" id="UP000000816">
    <property type="component" value="Chromosome"/>
</dbReference>
<dbReference type="GO" id="GO:0003723">
    <property type="term" value="F:RNA binding"/>
    <property type="evidence" value="ECO:0007669"/>
    <property type="project" value="InterPro"/>
</dbReference>
<dbReference type="GO" id="GO:0160148">
    <property type="term" value="F:tRNA pseudouridine(55) synthase activity"/>
    <property type="evidence" value="ECO:0007669"/>
    <property type="project" value="UniProtKB-EC"/>
</dbReference>
<dbReference type="GO" id="GO:1990481">
    <property type="term" value="P:mRNA pseudouridine synthesis"/>
    <property type="evidence" value="ECO:0007669"/>
    <property type="project" value="TreeGrafter"/>
</dbReference>
<dbReference type="GO" id="GO:0031119">
    <property type="term" value="P:tRNA pseudouridine synthesis"/>
    <property type="evidence" value="ECO:0007669"/>
    <property type="project" value="UniProtKB-UniRule"/>
</dbReference>
<dbReference type="CDD" id="cd02573">
    <property type="entry name" value="PseudoU_synth_EcTruB"/>
    <property type="match status" value="1"/>
</dbReference>
<dbReference type="Gene3D" id="3.30.2350.10">
    <property type="entry name" value="Pseudouridine synthase"/>
    <property type="match status" value="1"/>
</dbReference>
<dbReference type="HAMAP" id="MF_01080">
    <property type="entry name" value="TruB_bact"/>
    <property type="match status" value="1"/>
</dbReference>
<dbReference type="InterPro" id="IPR020103">
    <property type="entry name" value="PsdUridine_synth_cat_dom_sf"/>
</dbReference>
<dbReference type="InterPro" id="IPR002501">
    <property type="entry name" value="PsdUridine_synth_N"/>
</dbReference>
<dbReference type="InterPro" id="IPR005728">
    <property type="entry name" value="RPE1"/>
</dbReference>
<dbReference type="InterPro" id="IPR014780">
    <property type="entry name" value="tRNA_psdUridine_synth_TruB"/>
</dbReference>
<dbReference type="InterPro" id="IPR032819">
    <property type="entry name" value="TruB_C"/>
</dbReference>
<dbReference type="NCBIfam" id="TIGR01045">
    <property type="entry name" value="RPE1"/>
    <property type="match status" value="1"/>
</dbReference>
<dbReference type="NCBIfam" id="TIGR00431">
    <property type="entry name" value="TruB"/>
    <property type="match status" value="1"/>
</dbReference>
<dbReference type="PANTHER" id="PTHR13767:SF2">
    <property type="entry name" value="PSEUDOURIDYLATE SYNTHASE TRUB1"/>
    <property type="match status" value="1"/>
</dbReference>
<dbReference type="PANTHER" id="PTHR13767">
    <property type="entry name" value="TRNA-PSEUDOURIDINE SYNTHASE"/>
    <property type="match status" value="1"/>
</dbReference>
<dbReference type="Pfam" id="PF16198">
    <property type="entry name" value="TruB_C_2"/>
    <property type="match status" value="1"/>
</dbReference>
<dbReference type="Pfam" id="PF01509">
    <property type="entry name" value="TruB_N"/>
    <property type="match status" value="1"/>
</dbReference>
<dbReference type="SUPFAM" id="SSF55120">
    <property type="entry name" value="Pseudouridine synthase"/>
    <property type="match status" value="1"/>
</dbReference>
<evidence type="ECO:0000250" key="1"/>
<evidence type="ECO:0000305" key="2"/>
<name>TRUB_RICCN</name>
<feature type="chain" id="PRO_0000121894" description="tRNA pseudouridine synthase B">
    <location>
        <begin position="1"/>
        <end position="345"/>
    </location>
</feature>
<feature type="domain" description="RPE1 insert">
    <location>
        <begin position="261"/>
        <end position="309"/>
    </location>
</feature>
<feature type="active site" description="Nucleophile" evidence="1">
    <location>
        <position position="39"/>
    </location>
</feature>
<keyword id="KW-0413">Isomerase</keyword>
<keyword id="KW-0819">tRNA processing</keyword>
<proteinExistence type="inferred from homology"/>
<comment type="function">
    <text evidence="1">Responsible for synthesis of pseudouridine from uracil-55 in the psi GC loop of transfer RNAs.</text>
</comment>
<comment type="catalytic activity">
    <reaction>
        <text>uridine(55) in tRNA = pseudouridine(55) in tRNA</text>
        <dbReference type="Rhea" id="RHEA:42532"/>
        <dbReference type="Rhea" id="RHEA-COMP:10101"/>
        <dbReference type="Rhea" id="RHEA-COMP:10102"/>
        <dbReference type="ChEBI" id="CHEBI:65314"/>
        <dbReference type="ChEBI" id="CHEBI:65315"/>
        <dbReference type="EC" id="5.4.99.25"/>
    </reaction>
</comment>
<comment type="similarity">
    <text evidence="2">Belongs to the pseudouridine synthase TruB family. Type 1 subfamily.</text>
</comment>
<sequence>MSNYWLNIYKPRGISSAQLVSIVKKILGKTKIGHAGTLDVEAEGILPFAVGEATKLIHLLVDARKTYIFTVKFGMQTNSGDCAGKVIATKDCIPSQEEAYAVCSKFIGNVTQIPPAFSALKVNGVRAYKLAREGKKVELKPRNITIYDLKCLNFDEKNATATYYTECSKGTYIRTLAEDLALSLQSLGFVIELRRTQVGIFKEENAIRIKSPDEITKNALEENSIKIEAILDDILVLDATDSQAQQIKYGQKCLFNYEKDFRHLAKFAYREEFKGNTERNTTAYTLVREDASTGLTYKLPLEVEFGKMSVDLLWVRYKGTLLAIGSLNKSCFNSLRVFNLTQDFF</sequence>
<organism>
    <name type="scientific">Rickettsia conorii (strain ATCC VR-613 / Malish 7)</name>
    <dbReference type="NCBI Taxonomy" id="272944"/>
    <lineage>
        <taxon>Bacteria</taxon>
        <taxon>Pseudomonadati</taxon>
        <taxon>Pseudomonadota</taxon>
        <taxon>Alphaproteobacteria</taxon>
        <taxon>Rickettsiales</taxon>
        <taxon>Rickettsiaceae</taxon>
        <taxon>Rickettsieae</taxon>
        <taxon>Rickettsia</taxon>
        <taxon>spotted fever group</taxon>
    </lineage>
</organism>
<accession>Q92HV5</accession>
<protein>
    <recommendedName>
        <fullName>tRNA pseudouridine synthase B</fullName>
        <ecNumber>5.4.99.25</ecNumber>
    </recommendedName>
    <alternativeName>
        <fullName>tRNA pseudouridine(55) synthase</fullName>
        <shortName>Psi55 synthase</shortName>
    </alternativeName>
    <alternativeName>
        <fullName>tRNA pseudouridylate synthase</fullName>
    </alternativeName>
    <alternativeName>
        <fullName>tRNA-uridine isomerase</fullName>
    </alternativeName>
</protein>
<gene>
    <name type="primary">truB</name>
    <name type="ordered locus">RC0665</name>
</gene>
<reference key="1">
    <citation type="journal article" date="2001" name="Science">
        <title>Mechanisms of evolution in Rickettsia conorii and R. prowazekii.</title>
        <authorList>
            <person name="Ogata H."/>
            <person name="Audic S."/>
            <person name="Renesto-Audiffren P."/>
            <person name="Fournier P.-E."/>
            <person name="Barbe V."/>
            <person name="Samson D."/>
            <person name="Roux V."/>
            <person name="Cossart P."/>
            <person name="Weissenbach J."/>
            <person name="Claverie J.-M."/>
            <person name="Raoult D."/>
        </authorList>
    </citation>
    <scope>NUCLEOTIDE SEQUENCE [LARGE SCALE GENOMIC DNA]</scope>
    <source>
        <strain>ATCC VR-613 / Malish 7</strain>
    </source>
</reference>